<dbReference type="EC" id="2.1.1.178" evidence="1"/>
<dbReference type="EMBL" id="CP000026">
    <property type="protein sequence ID" value="AAV76995.1"/>
    <property type="molecule type" value="Genomic_DNA"/>
</dbReference>
<dbReference type="RefSeq" id="WP_011233026.1">
    <property type="nucleotide sequence ID" value="NC_006511.1"/>
</dbReference>
<dbReference type="SMR" id="Q5PHN5"/>
<dbReference type="KEGG" id="spt:SPA1023"/>
<dbReference type="HOGENOM" id="CLU_005316_6_2_6"/>
<dbReference type="Proteomes" id="UP000008185">
    <property type="component" value="Chromosome"/>
</dbReference>
<dbReference type="GO" id="GO:0005737">
    <property type="term" value="C:cytoplasm"/>
    <property type="evidence" value="ECO:0007669"/>
    <property type="project" value="UniProtKB-SubCell"/>
</dbReference>
<dbReference type="GO" id="GO:0003723">
    <property type="term" value="F:RNA binding"/>
    <property type="evidence" value="ECO:0007669"/>
    <property type="project" value="UniProtKB-KW"/>
</dbReference>
<dbReference type="GO" id="GO:0009383">
    <property type="term" value="F:rRNA (cytosine-C5-)-methyltransferase activity"/>
    <property type="evidence" value="ECO:0007669"/>
    <property type="project" value="TreeGrafter"/>
</dbReference>
<dbReference type="GO" id="GO:0070475">
    <property type="term" value="P:rRNA base methylation"/>
    <property type="evidence" value="ECO:0007669"/>
    <property type="project" value="TreeGrafter"/>
</dbReference>
<dbReference type="CDD" id="cd02440">
    <property type="entry name" value="AdoMet_MTases"/>
    <property type="match status" value="1"/>
</dbReference>
<dbReference type="FunFam" id="3.10.450.720:FF:000001">
    <property type="entry name" value="Ribosomal RNA small subunit methyltransferase F"/>
    <property type="match status" value="1"/>
</dbReference>
<dbReference type="FunFam" id="3.40.50.150:FF:000079">
    <property type="entry name" value="Ribosomal RNA small subunit methyltransferase F"/>
    <property type="match status" value="1"/>
</dbReference>
<dbReference type="Gene3D" id="3.10.450.720">
    <property type="match status" value="1"/>
</dbReference>
<dbReference type="Gene3D" id="3.40.50.150">
    <property type="entry name" value="Vaccinia Virus protein VP39"/>
    <property type="match status" value="1"/>
</dbReference>
<dbReference type="HAMAP" id="MF_01579">
    <property type="entry name" value="16SrRNA_methyltr_F"/>
    <property type="match status" value="1"/>
</dbReference>
<dbReference type="InterPro" id="IPR031341">
    <property type="entry name" value="Methyltr_RsmF_N"/>
</dbReference>
<dbReference type="InterPro" id="IPR049560">
    <property type="entry name" value="MeTrfase_RsmB-F_NOP2_cat"/>
</dbReference>
<dbReference type="InterPro" id="IPR001678">
    <property type="entry name" value="MeTrfase_RsmB-F_NOP2_dom"/>
</dbReference>
<dbReference type="InterPro" id="IPR027391">
    <property type="entry name" value="Nol1_Nop2_Fmu_2"/>
</dbReference>
<dbReference type="InterPro" id="IPR011023">
    <property type="entry name" value="Nop2p"/>
</dbReference>
<dbReference type="InterPro" id="IPR023267">
    <property type="entry name" value="RCMT"/>
</dbReference>
<dbReference type="InterPro" id="IPR023545">
    <property type="entry name" value="rRNA_ssu_MeTfrase_F"/>
</dbReference>
<dbReference type="InterPro" id="IPR018314">
    <property type="entry name" value="RsmB/NOL1/NOP2-like_CS"/>
</dbReference>
<dbReference type="InterPro" id="IPR029063">
    <property type="entry name" value="SAM-dependent_MTases_sf"/>
</dbReference>
<dbReference type="InterPro" id="IPR048457">
    <property type="entry name" value="YebU_pre-PUA_dom"/>
</dbReference>
<dbReference type="NCBIfam" id="TIGR00446">
    <property type="entry name" value="nop2p"/>
    <property type="match status" value="1"/>
</dbReference>
<dbReference type="NCBIfam" id="NF008898">
    <property type="entry name" value="PRK11933.1"/>
    <property type="match status" value="1"/>
</dbReference>
<dbReference type="PANTHER" id="PTHR22807:SF30">
    <property type="entry name" value="28S RRNA (CYTOSINE(4447)-C(5))-METHYLTRANSFERASE-RELATED"/>
    <property type="match status" value="1"/>
</dbReference>
<dbReference type="PANTHER" id="PTHR22807">
    <property type="entry name" value="NOP2 YEAST -RELATED NOL1/NOP2/FMU SUN DOMAIN-CONTAINING"/>
    <property type="match status" value="1"/>
</dbReference>
<dbReference type="Pfam" id="PF01189">
    <property type="entry name" value="Methyltr_RsmB-F"/>
    <property type="match status" value="1"/>
</dbReference>
<dbReference type="Pfam" id="PF17125">
    <property type="entry name" value="Methyltr_RsmF_N"/>
    <property type="match status" value="1"/>
</dbReference>
<dbReference type="Pfam" id="PF13636">
    <property type="entry name" value="Methyltranf_PUA"/>
    <property type="match status" value="1"/>
</dbReference>
<dbReference type="Pfam" id="PF21150">
    <property type="entry name" value="YebU_pre-PUA_dom"/>
    <property type="match status" value="1"/>
</dbReference>
<dbReference type="PRINTS" id="PR02008">
    <property type="entry name" value="RCMTFAMILY"/>
</dbReference>
<dbReference type="SUPFAM" id="SSF53335">
    <property type="entry name" value="S-adenosyl-L-methionine-dependent methyltransferases"/>
    <property type="match status" value="1"/>
</dbReference>
<dbReference type="PROSITE" id="PS01153">
    <property type="entry name" value="NOL1_NOP2_SUN"/>
    <property type="match status" value="1"/>
</dbReference>
<dbReference type="PROSITE" id="PS51686">
    <property type="entry name" value="SAM_MT_RSMB_NOP"/>
    <property type="match status" value="1"/>
</dbReference>
<organism>
    <name type="scientific">Salmonella paratyphi A (strain ATCC 9150 / SARB42)</name>
    <dbReference type="NCBI Taxonomy" id="295319"/>
    <lineage>
        <taxon>Bacteria</taxon>
        <taxon>Pseudomonadati</taxon>
        <taxon>Pseudomonadota</taxon>
        <taxon>Gammaproteobacteria</taxon>
        <taxon>Enterobacterales</taxon>
        <taxon>Enterobacteriaceae</taxon>
        <taxon>Salmonella</taxon>
    </lineage>
</organism>
<feature type="chain" id="PRO_0000285006" description="Ribosomal RNA small subunit methyltransferase F">
    <location>
        <begin position="1"/>
        <end position="479"/>
    </location>
</feature>
<feature type="active site" description="Nucleophile" evidence="1">
    <location>
        <position position="247"/>
    </location>
</feature>
<feature type="binding site" evidence="1">
    <location>
        <begin position="125"/>
        <end position="131"/>
    </location>
    <ligand>
        <name>S-adenosyl-L-methionine</name>
        <dbReference type="ChEBI" id="CHEBI:59789"/>
    </ligand>
</feature>
<feature type="binding site" evidence="1">
    <location>
        <position position="149"/>
    </location>
    <ligand>
        <name>S-adenosyl-L-methionine</name>
        <dbReference type="ChEBI" id="CHEBI:59789"/>
    </ligand>
</feature>
<feature type="binding site" evidence="1">
    <location>
        <position position="176"/>
    </location>
    <ligand>
        <name>S-adenosyl-L-methionine</name>
        <dbReference type="ChEBI" id="CHEBI:59789"/>
    </ligand>
</feature>
<feature type="binding site" evidence="1">
    <location>
        <position position="194"/>
    </location>
    <ligand>
        <name>S-adenosyl-L-methionine</name>
        <dbReference type="ChEBI" id="CHEBI:59789"/>
    </ligand>
</feature>
<protein>
    <recommendedName>
        <fullName evidence="1">Ribosomal RNA small subunit methyltransferase F</fullName>
        <ecNumber evidence="1">2.1.1.178</ecNumber>
    </recommendedName>
    <alternativeName>
        <fullName evidence="1">16S rRNA m5C1407 methyltransferase</fullName>
    </alternativeName>
    <alternativeName>
        <fullName evidence="1">rRNA (cytosine-C(5)-)-methyltransferase RsmF</fullName>
    </alternativeName>
</protein>
<proteinExistence type="inferred from homology"/>
<reference key="1">
    <citation type="journal article" date="2004" name="Nat. Genet.">
        <title>Comparison of genome degradation in Paratyphi A and Typhi, human-restricted serovars of Salmonella enterica that cause typhoid.</title>
        <authorList>
            <person name="McClelland M."/>
            <person name="Sanderson K.E."/>
            <person name="Clifton S.W."/>
            <person name="Latreille P."/>
            <person name="Porwollik S."/>
            <person name="Sabo A."/>
            <person name="Meyer R."/>
            <person name="Bieri T."/>
            <person name="Ozersky P."/>
            <person name="McLellan M."/>
            <person name="Harkins C.R."/>
            <person name="Wang C."/>
            <person name="Nguyen C."/>
            <person name="Berghoff A."/>
            <person name="Elliott G."/>
            <person name="Kohlberg S."/>
            <person name="Strong C."/>
            <person name="Du F."/>
            <person name="Carter J."/>
            <person name="Kremizki C."/>
            <person name="Layman D."/>
            <person name="Leonard S."/>
            <person name="Sun H."/>
            <person name="Fulton L."/>
            <person name="Nash W."/>
            <person name="Miner T."/>
            <person name="Minx P."/>
            <person name="Delehaunty K."/>
            <person name="Fronick C."/>
            <person name="Magrini V."/>
            <person name="Nhan M."/>
            <person name="Warren W."/>
            <person name="Florea L."/>
            <person name="Spieth J."/>
            <person name="Wilson R.K."/>
        </authorList>
    </citation>
    <scope>NUCLEOTIDE SEQUENCE [LARGE SCALE GENOMIC DNA]</scope>
    <source>
        <strain>ATCC 9150 / SARB42</strain>
    </source>
</reference>
<sequence>MAQHAVYFPDAFLTQMREAMPSTLSFDEFISACQRPLRRSIRINTLKISVADFLALIAPYGWSLTPIPWCHEGFWIERDDEEALPLGSTAEHLSGLFYIQEASSMLPVAALFADDNHPQRVMDMAAAPGSKTTQIAARMGNRGAILANEFSASRVKVLHANISRCGIANTALTHFDGRVFGAALPEMFDAILLDAPCSGEGVVRKDPDALKNWSPESNLDIAATQRELLDSAFHALRPGGTLVYSTCTLNRQENEDVCLWLKETYADAVEFLPLGDLFPDADRALTPEGFLHVFPQIYDCEGFFVARLRKMSSLPAMPAPGYKVGAFPFTPLKGREALNVTQAANAVGLLWDENLHLWQREKEVWLFPAEIESLIGKVRFSRLGIKLAESHNKGYRWQHEATIALACPTHAHAFELSAQEAEEWYRGRDIYPQTPPAADDVLVTFQHQPLGLAKRIGARIKNSYPRELVRDGKLFTGNS</sequence>
<evidence type="ECO:0000255" key="1">
    <source>
        <dbReference type="HAMAP-Rule" id="MF_01579"/>
    </source>
</evidence>
<comment type="function">
    <text evidence="1">Specifically methylates the cytosine at position 1407 (m5C1407) of 16S rRNA.</text>
</comment>
<comment type="catalytic activity">
    <reaction evidence="1">
        <text>cytidine(1407) in 16S rRNA + S-adenosyl-L-methionine = 5-methylcytidine(1407) in 16S rRNA + S-adenosyl-L-homocysteine + H(+)</text>
        <dbReference type="Rhea" id="RHEA:42756"/>
        <dbReference type="Rhea" id="RHEA-COMP:10223"/>
        <dbReference type="Rhea" id="RHEA-COMP:10224"/>
        <dbReference type="ChEBI" id="CHEBI:15378"/>
        <dbReference type="ChEBI" id="CHEBI:57856"/>
        <dbReference type="ChEBI" id="CHEBI:59789"/>
        <dbReference type="ChEBI" id="CHEBI:74483"/>
        <dbReference type="ChEBI" id="CHEBI:82748"/>
        <dbReference type="EC" id="2.1.1.178"/>
    </reaction>
</comment>
<comment type="subcellular location">
    <subcellularLocation>
        <location evidence="1">Cytoplasm</location>
    </subcellularLocation>
</comment>
<comment type="similarity">
    <text evidence="1">Belongs to the class I-like SAM-binding methyltransferase superfamily. RsmB/NOP family.</text>
</comment>
<keyword id="KW-0963">Cytoplasm</keyword>
<keyword id="KW-0489">Methyltransferase</keyword>
<keyword id="KW-0694">RNA-binding</keyword>
<keyword id="KW-0698">rRNA processing</keyword>
<keyword id="KW-0949">S-adenosyl-L-methionine</keyword>
<keyword id="KW-0808">Transferase</keyword>
<gene>
    <name evidence="1" type="primary">rsmF</name>
    <name type="ordered locus">SPA1023</name>
</gene>
<name>RSMF_SALPA</name>
<accession>Q5PHN5</accession>